<feature type="chain" id="PRO_0000286473" description="ADP,ATP carrier protein 3">
    <location>
        <begin position="1"/>
        <end position="501"/>
    </location>
</feature>
<feature type="transmembrane region" description="Helical" evidence="2">
    <location>
        <begin position="23"/>
        <end position="43"/>
    </location>
</feature>
<feature type="transmembrane region" description="Helical" evidence="2">
    <location>
        <begin position="59"/>
        <end position="79"/>
    </location>
</feature>
<feature type="transmembrane region" description="Helical" evidence="2">
    <location>
        <begin position="90"/>
        <end position="110"/>
    </location>
</feature>
<feature type="transmembrane region" description="Helical" evidence="2">
    <location>
        <begin position="146"/>
        <end position="166"/>
    </location>
</feature>
<feature type="transmembrane region" description="Helical" evidence="2">
    <location>
        <begin position="183"/>
        <end position="203"/>
    </location>
</feature>
<feature type="transmembrane region" description="Helical" evidence="2">
    <location>
        <begin position="227"/>
        <end position="247"/>
    </location>
</feature>
<feature type="transmembrane region" description="Helical" evidence="2">
    <location>
        <begin position="293"/>
        <end position="313"/>
    </location>
</feature>
<feature type="transmembrane region" description="Helical" evidence="2">
    <location>
        <begin position="326"/>
        <end position="346"/>
    </location>
</feature>
<feature type="transmembrane region" description="Helical" evidence="2">
    <location>
        <begin position="361"/>
        <end position="381"/>
    </location>
</feature>
<feature type="transmembrane region" description="Helical" evidence="2">
    <location>
        <begin position="383"/>
        <end position="403"/>
    </location>
</feature>
<feature type="transmembrane region" description="Helical" evidence="2">
    <location>
        <begin position="446"/>
        <end position="466"/>
    </location>
</feature>
<feature type="transmembrane region" description="Helical" evidence="2">
    <location>
        <begin position="470"/>
        <end position="490"/>
    </location>
</feature>
<evidence type="ECO:0000250" key="1"/>
<evidence type="ECO:0000255" key="2"/>
<evidence type="ECO:0000305" key="3"/>
<sequence>MLPPKIFFEKVKEIIWPIERKELKLFIPMALMMLCILFNFGALRSIKDSLVVPSMGAEIISLFKLWLVLPSCVIFTVLYVKLSNKLNFEYIFYIIVGSFLLFFLLFAYIIYPNQDIYHPNDEMINNLIASYPNFKWFIKIGSKWSYALMYIFSELWSAVVINLMFWQFANHIFDTSKAKRFYPVLGMVGNIGLIIAGSVLVFFSSGQEVIDSELLPDSFNSPAGNAIMLQPIMSIIVAAGIIAMLLFRIINRFILTDSINVLDTKKVTVKTKTKLSVIESIKLVIHSKYIGRIALLIICYGLLINIVEGPWKAKIKELHPNTIDYFNFMGRFNIWMGISCVTFMVIGSNILRRLGWLISALLTPIMLSITGLMFFIFIIFIEEIGACFGDFNLLYAAIIVGAIQNILSKSSKYSLFDSTKEMAYIPLSLELRTKGKAAVEVIGTKFGKSLGAFIQSLIFIIIPTATFDSIIIYLLVIFIVMMSLWIWNVIKLNKEYIELCK</sequence>
<proteinExistence type="inferred from homology"/>
<reference key="1">
    <citation type="journal article" date="2005" name="PLoS Biol.">
        <title>The genome sequence of Rickettsia felis identifies the first putative conjugative plasmid in an obligate intracellular parasite.</title>
        <authorList>
            <person name="Ogata H."/>
            <person name="Renesto P."/>
            <person name="Audic S."/>
            <person name="Robert C."/>
            <person name="Blanc G."/>
            <person name="Fournier P.-E."/>
            <person name="Parinello H."/>
            <person name="Claverie J.-M."/>
            <person name="Raoult D."/>
        </authorList>
    </citation>
    <scope>NUCLEOTIDE SEQUENCE [LARGE SCALE GENOMIC DNA]</scope>
    <source>
        <strain>ATCC VR-1525 / URRWXCal2</strain>
    </source>
</reference>
<name>TLCC_RICFE</name>
<keyword id="KW-0067">ATP-binding</keyword>
<keyword id="KW-1003">Cell membrane</keyword>
<keyword id="KW-0472">Membrane</keyword>
<keyword id="KW-0547">Nucleotide-binding</keyword>
<keyword id="KW-0812">Transmembrane</keyword>
<keyword id="KW-1133">Transmembrane helix</keyword>
<keyword id="KW-0813">Transport</keyword>
<gene>
    <name type="primary">tlcC</name>
    <name type="synonym">tlc3</name>
    <name type="ordered locus">RF_0837</name>
</gene>
<organism>
    <name type="scientific">Rickettsia felis (strain ATCC VR-1525 / URRWXCal2)</name>
    <name type="common">Rickettsia azadi</name>
    <dbReference type="NCBI Taxonomy" id="315456"/>
    <lineage>
        <taxon>Bacteria</taxon>
        <taxon>Pseudomonadati</taxon>
        <taxon>Pseudomonadota</taxon>
        <taxon>Alphaproteobacteria</taxon>
        <taxon>Rickettsiales</taxon>
        <taxon>Rickettsiaceae</taxon>
        <taxon>Rickettsieae</taxon>
        <taxon>Rickettsia</taxon>
        <taxon>spotted fever group</taxon>
    </lineage>
</organism>
<comment type="function">
    <text evidence="1">Provides the rickettsial cell with host ATP in exchange for rickettsial ADP. This is an obligate exchange system. This energy acquiring activity is an important component of rickettsial parasitism (By similarity).</text>
</comment>
<comment type="subcellular location">
    <subcellularLocation>
        <location>Cell membrane</location>
        <topology>Multi-pass membrane protein</topology>
    </subcellularLocation>
</comment>
<comment type="similarity">
    <text evidence="3">Belongs to the ADP/ATP translocase tlc family.</text>
</comment>
<accession>Q4UL85</accession>
<dbReference type="EMBL" id="CP000053">
    <property type="protein sequence ID" value="AAY61688.1"/>
    <property type="molecule type" value="Genomic_DNA"/>
</dbReference>
<dbReference type="STRING" id="315456.RF_0837"/>
<dbReference type="KEGG" id="rfe:RF_0837"/>
<dbReference type="eggNOG" id="COG3202">
    <property type="taxonomic scope" value="Bacteria"/>
</dbReference>
<dbReference type="HOGENOM" id="CLU_023964_0_1_5"/>
<dbReference type="OrthoDB" id="19786at2"/>
<dbReference type="Proteomes" id="UP000008548">
    <property type="component" value="Chromosome"/>
</dbReference>
<dbReference type="GO" id="GO:0005886">
    <property type="term" value="C:plasma membrane"/>
    <property type="evidence" value="ECO:0007669"/>
    <property type="project" value="UniProtKB-SubCell"/>
</dbReference>
<dbReference type="GO" id="GO:0005524">
    <property type="term" value="F:ATP binding"/>
    <property type="evidence" value="ECO:0007669"/>
    <property type="project" value="UniProtKB-KW"/>
</dbReference>
<dbReference type="GO" id="GO:0005471">
    <property type="term" value="F:ATP:ADP antiporter activity"/>
    <property type="evidence" value="ECO:0007669"/>
    <property type="project" value="InterPro"/>
</dbReference>
<dbReference type="InterPro" id="IPR004667">
    <property type="entry name" value="ADP_ATP_car_bac_type"/>
</dbReference>
<dbReference type="NCBIfam" id="TIGR00769">
    <property type="entry name" value="AAA"/>
    <property type="match status" value="1"/>
</dbReference>
<dbReference type="PANTHER" id="PTHR31187">
    <property type="match status" value="1"/>
</dbReference>
<dbReference type="PANTHER" id="PTHR31187:SF1">
    <property type="entry name" value="ADP,ATP CARRIER PROTEIN 1"/>
    <property type="match status" value="1"/>
</dbReference>
<dbReference type="Pfam" id="PF03219">
    <property type="entry name" value="TLC"/>
    <property type="match status" value="1"/>
</dbReference>
<protein>
    <recommendedName>
        <fullName>ADP,ATP carrier protein 3</fullName>
    </recommendedName>
    <alternativeName>
        <fullName>ADP/ATP translocase 3</fullName>
    </alternativeName>
</protein>